<name>RL14_STAAR</name>
<organism>
    <name type="scientific">Staphylococcus aureus (strain MRSA252)</name>
    <dbReference type="NCBI Taxonomy" id="282458"/>
    <lineage>
        <taxon>Bacteria</taxon>
        <taxon>Bacillati</taxon>
        <taxon>Bacillota</taxon>
        <taxon>Bacilli</taxon>
        <taxon>Bacillales</taxon>
        <taxon>Staphylococcaceae</taxon>
        <taxon>Staphylococcus</taxon>
    </lineage>
</organism>
<sequence length="122" mass="13135">MIQQETRLKVADNSGAREVLTIKVLGGSGRKTANIGDVIVCTVKNATPGGVVKKGDVVKAVIVRTKSGVRRNDGSYIKFDENACVIIRDDKGPRGTRIFGPVARELREGNFMKIVSLAPEVL</sequence>
<dbReference type="EMBL" id="BX571856">
    <property type="protein sequence ID" value="CAG41306.1"/>
    <property type="molecule type" value="Genomic_DNA"/>
</dbReference>
<dbReference type="RefSeq" id="WP_000615921.1">
    <property type="nucleotide sequence ID" value="NC_002952.2"/>
</dbReference>
<dbReference type="SMR" id="Q6GEJ3"/>
<dbReference type="GeneID" id="98346552"/>
<dbReference type="KEGG" id="sar:SAR2325"/>
<dbReference type="HOGENOM" id="CLU_095071_2_1_9"/>
<dbReference type="Proteomes" id="UP000000596">
    <property type="component" value="Chromosome"/>
</dbReference>
<dbReference type="GO" id="GO:0022625">
    <property type="term" value="C:cytosolic large ribosomal subunit"/>
    <property type="evidence" value="ECO:0007669"/>
    <property type="project" value="TreeGrafter"/>
</dbReference>
<dbReference type="GO" id="GO:0070180">
    <property type="term" value="F:large ribosomal subunit rRNA binding"/>
    <property type="evidence" value="ECO:0007669"/>
    <property type="project" value="TreeGrafter"/>
</dbReference>
<dbReference type="GO" id="GO:0003735">
    <property type="term" value="F:structural constituent of ribosome"/>
    <property type="evidence" value="ECO:0007669"/>
    <property type="project" value="InterPro"/>
</dbReference>
<dbReference type="GO" id="GO:0006412">
    <property type="term" value="P:translation"/>
    <property type="evidence" value="ECO:0007669"/>
    <property type="project" value="UniProtKB-UniRule"/>
</dbReference>
<dbReference type="CDD" id="cd00337">
    <property type="entry name" value="Ribosomal_uL14"/>
    <property type="match status" value="1"/>
</dbReference>
<dbReference type="FunFam" id="2.40.150.20:FF:000001">
    <property type="entry name" value="50S ribosomal protein L14"/>
    <property type="match status" value="1"/>
</dbReference>
<dbReference type="Gene3D" id="2.40.150.20">
    <property type="entry name" value="Ribosomal protein L14"/>
    <property type="match status" value="1"/>
</dbReference>
<dbReference type="HAMAP" id="MF_01367">
    <property type="entry name" value="Ribosomal_uL14"/>
    <property type="match status" value="1"/>
</dbReference>
<dbReference type="InterPro" id="IPR000218">
    <property type="entry name" value="Ribosomal_uL14"/>
</dbReference>
<dbReference type="InterPro" id="IPR005745">
    <property type="entry name" value="Ribosomal_uL14_bac-type"/>
</dbReference>
<dbReference type="InterPro" id="IPR019972">
    <property type="entry name" value="Ribosomal_uL14_CS"/>
</dbReference>
<dbReference type="InterPro" id="IPR036853">
    <property type="entry name" value="Ribosomal_uL14_sf"/>
</dbReference>
<dbReference type="NCBIfam" id="TIGR01067">
    <property type="entry name" value="rplN_bact"/>
    <property type="match status" value="1"/>
</dbReference>
<dbReference type="PANTHER" id="PTHR11761">
    <property type="entry name" value="50S/60S RIBOSOMAL PROTEIN L14/L23"/>
    <property type="match status" value="1"/>
</dbReference>
<dbReference type="PANTHER" id="PTHR11761:SF3">
    <property type="entry name" value="LARGE RIBOSOMAL SUBUNIT PROTEIN UL14M"/>
    <property type="match status" value="1"/>
</dbReference>
<dbReference type="Pfam" id="PF00238">
    <property type="entry name" value="Ribosomal_L14"/>
    <property type="match status" value="1"/>
</dbReference>
<dbReference type="SMART" id="SM01374">
    <property type="entry name" value="Ribosomal_L14"/>
    <property type="match status" value="1"/>
</dbReference>
<dbReference type="SUPFAM" id="SSF50193">
    <property type="entry name" value="Ribosomal protein L14"/>
    <property type="match status" value="1"/>
</dbReference>
<dbReference type="PROSITE" id="PS00049">
    <property type="entry name" value="RIBOSOMAL_L14"/>
    <property type="match status" value="1"/>
</dbReference>
<keyword id="KW-0687">Ribonucleoprotein</keyword>
<keyword id="KW-0689">Ribosomal protein</keyword>
<keyword id="KW-0694">RNA-binding</keyword>
<keyword id="KW-0699">rRNA-binding</keyword>
<protein>
    <recommendedName>
        <fullName evidence="1">Large ribosomal subunit protein uL14</fullName>
    </recommendedName>
    <alternativeName>
        <fullName evidence="2">50S ribosomal protein L14</fullName>
    </alternativeName>
</protein>
<proteinExistence type="inferred from homology"/>
<gene>
    <name evidence="1" type="primary">rplN</name>
    <name type="ordered locus">SAR2325</name>
</gene>
<evidence type="ECO:0000255" key="1">
    <source>
        <dbReference type="HAMAP-Rule" id="MF_01367"/>
    </source>
</evidence>
<evidence type="ECO:0000305" key="2"/>
<reference key="1">
    <citation type="journal article" date="2004" name="Proc. Natl. Acad. Sci. U.S.A.">
        <title>Complete genomes of two clinical Staphylococcus aureus strains: evidence for the rapid evolution of virulence and drug resistance.</title>
        <authorList>
            <person name="Holden M.T.G."/>
            <person name="Feil E.J."/>
            <person name="Lindsay J.A."/>
            <person name="Peacock S.J."/>
            <person name="Day N.P.J."/>
            <person name="Enright M.C."/>
            <person name="Foster T.J."/>
            <person name="Moore C.E."/>
            <person name="Hurst L."/>
            <person name="Atkin R."/>
            <person name="Barron A."/>
            <person name="Bason N."/>
            <person name="Bentley S.D."/>
            <person name="Chillingworth C."/>
            <person name="Chillingworth T."/>
            <person name="Churcher C."/>
            <person name="Clark L."/>
            <person name="Corton C."/>
            <person name="Cronin A."/>
            <person name="Doggett J."/>
            <person name="Dowd L."/>
            <person name="Feltwell T."/>
            <person name="Hance Z."/>
            <person name="Harris B."/>
            <person name="Hauser H."/>
            <person name="Holroyd S."/>
            <person name="Jagels K."/>
            <person name="James K.D."/>
            <person name="Lennard N."/>
            <person name="Line A."/>
            <person name="Mayes R."/>
            <person name="Moule S."/>
            <person name="Mungall K."/>
            <person name="Ormond D."/>
            <person name="Quail M.A."/>
            <person name="Rabbinowitsch E."/>
            <person name="Rutherford K.M."/>
            <person name="Sanders M."/>
            <person name="Sharp S."/>
            <person name="Simmonds M."/>
            <person name="Stevens K."/>
            <person name="Whitehead S."/>
            <person name="Barrell B.G."/>
            <person name="Spratt B.G."/>
            <person name="Parkhill J."/>
        </authorList>
    </citation>
    <scope>NUCLEOTIDE SEQUENCE [LARGE SCALE GENOMIC DNA]</scope>
    <source>
        <strain>MRSA252</strain>
    </source>
</reference>
<accession>Q6GEJ3</accession>
<comment type="function">
    <text evidence="1">Binds to 23S rRNA. Forms part of two intersubunit bridges in the 70S ribosome.</text>
</comment>
<comment type="subunit">
    <text evidence="1">Part of the 50S ribosomal subunit. Forms a cluster with proteins L3 and L19. In the 70S ribosome, L14 and L19 interact and together make contacts with the 16S rRNA in bridges B5 and B8.</text>
</comment>
<comment type="similarity">
    <text evidence="1">Belongs to the universal ribosomal protein uL14 family.</text>
</comment>
<feature type="chain" id="PRO_0000224015" description="Large ribosomal subunit protein uL14">
    <location>
        <begin position="1"/>
        <end position="122"/>
    </location>
</feature>